<reference key="1">
    <citation type="journal article" date="2014" name="Nat. Commun.">
        <title>Evolution of separate predation- and defence-evoked venoms in carnivorous cone snails.</title>
        <authorList>
            <person name="Dutertre S."/>
            <person name="Jin A.-H."/>
            <person name="Vetter I."/>
            <person name="Hamilton B."/>
            <person name="Sunagar K."/>
            <person name="Lavergne V."/>
            <person name="Dutertre V."/>
            <person name="Fry B.G."/>
            <person name="Antunes A."/>
            <person name="Venter D.J."/>
            <person name="Alewood P.F."/>
            <person name="Lewis R.J."/>
        </authorList>
    </citation>
    <scope>NUCLEOTIDE SEQUENCE [MRNA]</scope>
    <source>
        <tissue>Venom duct</tissue>
    </source>
</reference>
<reference key="2">
    <citation type="journal article" date="1987" name="J. Biol. Chem.">
        <title>Invertebrate vasopressin/oxytocin homologs. Characterization of peptides from Conus geographus and Conus striatus venoms.</title>
        <authorList>
            <person name="Cruz L.J."/>
            <person name="de Santos V."/>
            <person name="Zafaralla G.C."/>
            <person name="Ramilo C.A."/>
            <person name="Zeikus R.D."/>
            <person name="Gray W.R."/>
            <person name="Olivera B.M."/>
        </authorList>
    </citation>
    <scope>PROTEIN SEQUENCE OF 28-36</scope>
    <scope>FUNCTION</scope>
    <scope>BIOASSAY</scope>
    <scope>AMIDATION AT GLY-36</scope>
    <scope>SUBCELLULAR LOCATION</scope>
    <scope>DISULFIDE BOND</scope>
    <source>
        <tissue>Venom</tissue>
    </source>
</reference>
<reference key="3">
    <citation type="journal article" date="2020" name="Mar. Drugs">
        <title>Synthesis, pharmacological and structural characterization of novel conopressins from Conus miliaris.</title>
        <authorList>
            <person name="Giribaldi J."/>
            <person name="Ragnarsson L."/>
            <person name="Pujante T."/>
            <person name="Enjalbal C."/>
            <person name="Wilson D."/>
            <person name="Daly N.L."/>
            <person name="Lewis R.J."/>
            <person name="Dutertre S."/>
        </authorList>
    </citation>
    <scope>STRUCTURE BY NMR OF 28-36</scope>
    <scope>FUNCTION</scope>
</reference>
<comment type="function">
    <molecule>Conopressin-G</molecule>
    <text evidence="4 5">Targets vasopressin-oxytocin related receptors (PubMed:32155768). Is more active on fish receptors than on their human counterparts, supporting an evolved role of this conopressin in the envenomation process (PubMed:32155768). Acts as an agonist on zebrafish vasopressin receptors V1a1R (EC(50)=10.6 nM), V1a2R (EC(50)=44.06 nM, partial agonist), V2R (EC(50)=299.2 nM) and oxytocin receptor (EC(50)=353.73 nM, partial agonist) (PubMed:32155768). Shows a weaker activity on human receptors AVPR1B (EC(50)=51.92 nM), AVPR1A (EC(50)=123.78 nM), AVPR2 (EC(50)=299.2 nM) and oxytocin (OXTR) receptor (EC(50)=455.66 nM, partial agonist). In vivo, exhibits grooming and scratching behavior in mice, following intracerebral injection (PubMed:3680228).</text>
</comment>
<comment type="subcellular location">
    <subcellularLocation>
        <location evidence="5">Secreted</location>
    </subcellularLocation>
</comment>
<comment type="tissue specificity">
    <text evidence="10">Expressed by the venom gland.</text>
</comment>
<comment type="domain">
    <text evidence="9">The cysteine framework of the conopressin is C-C.</text>
</comment>
<comment type="similarity">
    <text evidence="9">Belongs to the vasopressin/oxytocin family.</text>
</comment>
<feature type="signal peptide" evidence="3">
    <location>
        <begin position="1"/>
        <end position="27"/>
    </location>
</feature>
<feature type="peptide" id="PRO_0000044098" description="Conopressin-G" evidence="5">
    <location>
        <begin position="28"/>
        <end position="36"/>
    </location>
</feature>
<feature type="propeptide" id="PRO_0000435032" evidence="9">
    <location>
        <begin position="37"/>
        <end position="44"/>
    </location>
</feature>
<feature type="chain" id="PRO_0000435033" description="Conophysin-G">
    <location>
        <begin position="45"/>
        <end position="128"/>
    </location>
</feature>
<feature type="modified residue" description="Glycine amide" evidence="5">
    <location>
        <position position="36"/>
    </location>
</feature>
<feature type="disulfide bond" evidence="5">
    <location>
        <begin position="28"/>
        <end position="33"/>
    </location>
</feature>
<feature type="disulfide bond" evidence="2">
    <location>
        <begin position="50"/>
        <end position="90"/>
    </location>
</feature>
<feature type="disulfide bond" evidence="2">
    <location>
        <begin position="53"/>
        <end position="64"/>
    </location>
</feature>
<feature type="disulfide bond" evidence="2">
    <location>
        <begin position="58"/>
        <end position="80"/>
    </location>
</feature>
<feature type="disulfide bond" evidence="2">
    <location>
        <begin position="65"/>
        <end position="70"/>
    </location>
</feature>
<feature type="disulfide bond" evidence="2">
    <location>
        <begin position="97"/>
        <end position="115"/>
    </location>
</feature>
<feature type="disulfide bond" evidence="2">
    <location>
        <begin position="109"/>
        <end position="127"/>
    </location>
</feature>
<feature type="disulfide bond" evidence="2">
    <location>
        <begin position="116"/>
        <end position="121"/>
    </location>
</feature>
<proteinExistence type="evidence at protein level"/>
<evidence type="ECO:0000250" key="1">
    <source>
        <dbReference type="UniProtKB" id="A0A4Y5X1A7"/>
    </source>
</evidence>
<evidence type="ECO:0000250" key="2">
    <source>
        <dbReference type="UniProtKB" id="P01175"/>
    </source>
</evidence>
<evidence type="ECO:0000255" key="3"/>
<evidence type="ECO:0000269" key="4">
    <source>
    </source>
</evidence>
<evidence type="ECO:0000269" key="5">
    <source>
    </source>
</evidence>
<evidence type="ECO:0000303" key="6">
    <source>
    </source>
</evidence>
<evidence type="ECO:0000303" key="7">
    <source>
    </source>
</evidence>
<evidence type="ECO:0000303" key="8">
    <source>
    </source>
</evidence>
<evidence type="ECO:0000305" key="9"/>
<evidence type="ECO:0000305" key="10">
    <source>
    </source>
</evidence>
<accession>P05486</accession>
<accession>X5I9X9</accession>
<protein>
    <recommendedName>
        <fullName evidence="9">Conopressin-conophysin</fullName>
    </recommendedName>
    <component>
        <recommendedName>
            <fullName evidence="6">Conopressin-G</fullName>
            <shortName evidence="7">Con-G</shortName>
        </recommendedName>
        <alternativeName>
            <fullName evidence="1">Conopressin-K</fullName>
        </alternativeName>
        <alternativeName>
            <fullName evidence="8">Lys-conopressin-G</fullName>
        </alternativeName>
    </component>
    <component>
        <recommendedName>
            <fullName evidence="6">Conophysin-G</fullName>
        </recommendedName>
    </component>
</protein>
<dbReference type="EMBL" id="AB910804">
    <property type="protein sequence ID" value="BAO65572.1"/>
    <property type="molecule type" value="mRNA"/>
</dbReference>
<dbReference type="PIR" id="A28495">
    <property type="entry name" value="A28495"/>
</dbReference>
<dbReference type="SMR" id="P05486"/>
<dbReference type="ConoServer" id="1266">
    <property type="toxin name" value="conopressin-G"/>
</dbReference>
<dbReference type="ConoServer" id="8951">
    <property type="toxin name" value="conopressin-G"/>
</dbReference>
<dbReference type="ConoServer" id="8953">
    <property type="toxin name" value="conopressin-G"/>
</dbReference>
<dbReference type="ConoServer" id="8954">
    <property type="toxin name" value="conopressin-G"/>
</dbReference>
<dbReference type="GO" id="GO:0005615">
    <property type="term" value="C:extracellular space"/>
    <property type="evidence" value="ECO:0007669"/>
    <property type="project" value="TreeGrafter"/>
</dbReference>
<dbReference type="GO" id="GO:0030141">
    <property type="term" value="C:secretory granule"/>
    <property type="evidence" value="ECO:0007669"/>
    <property type="project" value="TreeGrafter"/>
</dbReference>
<dbReference type="GO" id="GO:0005185">
    <property type="term" value="F:neurohypophyseal hormone activity"/>
    <property type="evidence" value="ECO:0007669"/>
    <property type="project" value="InterPro"/>
</dbReference>
<dbReference type="GO" id="GO:0090729">
    <property type="term" value="F:toxin activity"/>
    <property type="evidence" value="ECO:0007669"/>
    <property type="project" value="UniProtKB-KW"/>
</dbReference>
<dbReference type="Gene3D" id="2.60.9.10">
    <property type="entry name" value="Neurohypophysial hormone domain"/>
    <property type="match status" value="1"/>
</dbReference>
<dbReference type="InterPro" id="IPR000981">
    <property type="entry name" value="Neurhyp_horm"/>
</dbReference>
<dbReference type="InterPro" id="IPR036387">
    <property type="entry name" value="Neurhyp_horm_dom_sf"/>
</dbReference>
<dbReference type="InterPro" id="IPR022423">
    <property type="entry name" value="Neurohypophysial_hormone_CS"/>
</dbReference>
<dbReference type="PANTHER" id="PTHR11681:SF5">
    <property type="entry name" value="ISOTOCIN"/>
    <property type="match status" value="1"/>
</dbReference>
<dbReference type="PANTHER" id="PTHR11681">
    <property type="entry name" value="NEUROPHYSIN"/>
    <property type="match status" value="1"/>
</dbReference>
<dbReference type="Pfam" id="PF00184">
    <property type="entry name" value="Hormone_5"/>
    <property type="match status" value="1"/>
</dbReference>
<dbReference type="PRINTS" id="PR00831">
    <property type="entry name" value="NEUROPHYSIN"/>
</dbReference>
<dbReference type="SMART" id="SM00003">
    <property type="entry name" value="NH"/>
    <property type="match status" value="1"/>
</dbReference>
<dbReference type="SUPFAM" id="SSF49606">
    <property type="entry name" value="Neurophysin II"/>
    <property type="match status" value="1"/>
</dbReference>
<dbReference type="PROSITE" id="PS00264">
    <property type="entry name" value="NEUROHYPOPHYS_HORM"/>
    <property type="match status" value="1"/>
</dbReference>
<keyword id="KW-0027">Amidation</keyword>
<keyword id="KW-0903">Direct protein sequencing</keyword>
<keyword id="KW-1015">Disulfide bond</keyword>
<keyword id="KW-1213">G-protein coupled receptor impairing toxin</keyword>
<keyword id="KW-0964">Secreted</keyword>
<keyword id="KW-0732">Signal</keyword>
<keyword id="KW-0800">Toxin</keyword>
<sequence>MTRSAMQMGRLTLVLCLLLLLLLTTQACFIRNCPKGGKRDVDERYLFKACMSCSFGQCVGPRICCGPRGCEMGTAEANRCIEEDEDPIPCQVVGQHCDLNNPGNIHGNCVANGICCVDDTCTIHTGCL</sequence>
<organism>
    <name type="scientific">Conus geographus</name>
    <name type="common">Geography cone</name>
    <name type="synonym">Nubecula geographus</name>
    <dbReference type="NCBI Taxonomy" id="6491"/>
    <lineage>
        <taxon>Eukaryota</taxon>
        <taxon>Metazoa</taxon>
        <taxon>Spiralia</taxon>
        <taxon>Lophotrochozoa</taxon>
        <taxon>Mollusca</taxon>
        <taxon>Gastropoda</taxon>
        <taxon>Caenogastropoda</taxon>
        <taxon>Neogastropoda</taxon>
        <taxon>Conoidea</taxon>
        <taxon>Conidae</taxon>
        <taxon>Conus</taxon>
        <taxon>Gastridium</taxon>
    </lineage>
</organism>
<name>CESS_CONGE</name>